<feature type="chain" id="PRO_0000268879" description="Small ribosomal subunit protein uS14">
    <location>
        <begin position="1"/>
        <end position="56"/>
    </location>
</feature>
<feature type="binding site" evidence="1">
    <location>
        <position position="21"/>
    </location>
    <ligand>
        <name>Zn(2+)</name>
        <dbReference type="ChEBI" id="CHEBI:29105"/>
    </ligand>
</feature>
<feature type="binding site" evidence="1">
    <location>
        <position position="24"/>
    </location>
    <ligand>
        <name>Zn(2+)</name>
        <dbReference type="ChEBI" id="CHEBI:29105"/>
    </ligand>
</feature>
<feature type="binding site" evidence="1">
    <location>
        <position position="39"/>
    </location>
    <ligand>
        <name>Zn(2+)</name>
        <dbReference type="ChEBI" id="CHEBI:29105"/>
    </ligand>
</feature>
<feature type="binding site" evidence="1">
    <location>
        <position position="42"/>
    </location>
    <ligand>
        <name>Zn(2+)</name>
        <dbReference type="ChEBI" id="CHEBI:29105"/>
    </ligand>
</feature>
<name>RS29_GUITH</name>
<organism>
    <name type="scientific">Guillardia theta</name>
    <name type="common">Cryptophyte</name>
    <name type="synonym">Cryptomonas phi</name>
    <dbReference type="NCBI Taxonomy" id="55529"/>
    <lineage>
        <taxon>Eukaryota</taxon>
        <taxon>Cryptophyceae</taxon>
        <taxon>Pyrenomonadales</taxon>
        <taxon>Geminigeraceae</taxon>
        <taxon>Guillardia</taxon>
    </lineage>
</organism>
<protein>
    <recommendedName>
        <fullName evidence="2">Small ribosomal subunit protein uS14</fullName>
    </recommendedName>
    <alternativeName>
        <fullName>40S ribosomal protein S29A</fullName>
    </alternativeName>
</protein>
<keyword id="KW-0479">Metal-binding</keyword>
<keyword id="KW-0687">Ribonucleoprotein</keyword>
<keyword id="KW-0689">Ribosomal protein</keyword>
<keyword id="KW-0862">Zinc</keyword>
<dbReference type="EMBL" id="AF083031">
    <property type="protein sequence ID" value="AAK39656.1"/>
    <property type="molecule type" value="Genomic_DNA"/>
</dbReference>
<dbReference type="PIR" id="C90120">
    <property type="entry name" value="C90120"/>
</dbReference>
<dbReference type="RefSeq" id="XP_001713347.1">
    <property type="nucleotide sequence ID" value="XM_001713295.1"/>
</dbReference>
<dbReference type="SMR" id="Q98SC7"/>
<dbReference type="GeneID" id="857121"/>
<dbReference type="Proteomes" id="UP000242167">
    <property type="component" value="Chromosome 3"/>
</dbReference>
<dbReference type="GO" id="GO:0022627">
    <property type="term" value="C:cytosolic small ribosomal subunit"/>
    <property type="evidence" value="ECO:0007669"/>
    <property type="project" value="TreeGrafter"/>
</dbReference>
<dbReference type="GO" id="GO:0003735">
    <property type="term" value="F:structural constituent of ribosome"/>
    <property type="evidence" value="ECO:0007669"/>
    <property type="project" value="InterPro"/>
</dbReference>
<dbReference type="GO" id="GO:0008270">
    <property type="term" value="F:zinc ion binding"/>
    <property type="evidence" value="ECO:0007669"/>
    <property type="project" value="InterPro"/>
</dbReference>
<dbReference type="GO" id="GO:0002181">
    <property type="term" value="P:cytoplasmic translation"/>
    <property type="evidence" value="ECO:0007669"/>
    <property type="project" value="TreeGrafter"/>
</dbReference>
<dbReference type="FunFam" id="4.10.830.10:FF:000002">
    <property type="entry name" value="40S ribosomal protein S29"/>
    <property type="match status" value="1"/>
</dbReference>
<dbReference type="Gene3D" id="4.10.830.10">
    <property type="entry name" value="30s Ribosomal Protein S14, Chain N"/>
    <property type="match status" value="1"/>
</dbReference>
<dbReference type="InterPro" id="IPR001209">
    <property type="entry name" value="Ribosomal_uS14"/>
</dbReference>
<dbReference type="InterPro" id="IPR018271">
    <property type="entry name" value="Ribosomal_uS14_CS"/>
</dbReference>
<dbReference type="InterPro" id="IPR039744">
    <property type="entry name" value="RIbosomal_uS14_euk_arc"/>
</dbReference>
<dbReference type="InterPro" id="IPR043140">
    <property type="entry name" value="Ribosomal_uS14_sf"/>
</dbReference>
<dbReference type="NCBIfam" id="NF004424">
    <property type="entry name" value="PRK05766.1"/>
    <property type="match status" value="1"/>
</dbReference>
<dbReference type="PANTHER" id="PTHR12010">
    <property type="entry name" value="40S RIBOSOMAL PROTEIN S29"/>
    <property type="match status" value="1"/>
</dbReference>
<dbReference type="PANTHER" id="PTHR12010:SF2">
    <property type="entry name" value="40S RIBOSOMAL PROTEIN S29"/>
    <property type="match status" value="1"/>
</dbReference>
<dbReference type="Pfam" id="PF00253">
    <property type="entry name" value="Ribosomal_S14"/>
    <property type="match status" value="1"/>
</dbReference>
<dbReference type="PROSITE" id="PS00527">
    <property type="entry name" value="RIBOSOMAL_S14"/>
    <property type="match status" value="1"/>
</dbReference>
<sequence length="56" mass="6597">MSHKNIWNKHSRTYGKGSRGCRICGNRSGLIRKYGLSICRQCFREKSQNLGFDKYR</sequence>
<gene>
    <name type="primary">rps29A</name>
</gene>
<comment type="cofactor">
    <cofactor evidence="2">
        <name>Zn(2+)</name>
        <dbReference type="ChEBI" id="CHEBI:29105"/>
    </cofactor>
    <text evidence="2">Binds 1 zinc ion per subunit.</text>
</comment>
<comment type="similarity">
    <text evidence="2">Belongs to the universal ribosomal protein uS14 family.</text>
</comment>
<evidence type="ECO:0000255" key="1"/>
<evidence type="ECO:0000305" key="2"/>
<reference key="1">
    <citation type="journal article" date="2001" name="Nature">
        <title>The highly reduced genome of an enslaved algal nucleus.</title>
        <authorList>
            <person name="Douglas S.E."/>
            <person name="Zauner S."/>
            <person name="Fraunholz M."/>
            <person name="Beaton M."/>
            <person name="Penny S.L."/>
            <person name="Deng L.-T."/>
            <person name="Wu X."/>
            <person name="Reith M.E."/>
            <person name="Cavalier-Smith T."/>
            <person name="Maier U.-G."/>
        </authorList>
    </citation>
    <scope>NUCLEOTIDE SEQUENCE [LARGE SCALE GENOMIC DNA]</scope>
</reference>
<geneLocation type="nucleomorph"/>
<proteinExistence type="inferred from homology"/>
<accession>Q98SC7</accession>